<proteinExistence type="inferred from homology"/>
<protein>
    <recommendedName>
        <fullName evidence="1">Glutamyl-tRNA(Gln) amidotransferase subunit A</fullName>
        <shortName evidence="1">Glu-ADT subunit A</shortName>
        <ecNumber evidence="1">6.3.5.7</ecNumber>
    </recommendedName>
</protein>
<accession>B8DFG8</accession>
<comment type="function">
    <text evidence="1">Allows the formation of correctly charged Gln-tRNA(Gln) through the transamidation of misacylated Glu-tRNA(Gln) in organisms which lack glutaminyl-tRNA synthetase. The reaction takes place in the presence of glutamine and ATP through an activated gamma-phospho-Glu-tRNA(Gln).</text>
</comment>
<comment type="catalytic activity">
    <reaction evidence="1">
        <text>L-glutamyl-tRNA(Gln) + L-glutamine + ATP + H2O = L-glutaminyl-tRNA(Gln) + L-glutamate + ADP + phosphate + H(+)</text>
        <dbReference type="Rhea" id="RHEA:17521"/>
        <dbReference type="Rhea" id="RHEA-COMP:9681"/>
        <dbReference type="Rhea" id="RHEA-COMP:9684"/>
        <dbReference type="ChEBI" id="CHEBI:15377"/>
        <dbReference type="ChEBI" id="CHEBI:15378"/>
        <dbReference type="ChEBI" id="CHEBI:29985"/>
        <dbReference type="ChEBI" id="CHEBI:30616"/>
        <dbReference type="ChEBI" id="CHEBI:43474"/>
        <dbReference type="ChEBI" id="CHEBI:58359"/>
        <dbReference type="ChEBI" id="CHEBI:78520"/>
        <dbReference type="ChEBI" id="CHEBI:78521"/>
        <dbReference type="ChEBI" id="CHEBI:456216"/>
        <dbReference type="EC" id="6.3.5.7"/>
    </reaction>
</comment>
<comment type="subunit">
    <text evidence="1">Heterotrimer of A, B and C subunits.</text>
</comment>
<comment type="similarity">
    <text evidence="1">Belongs to the amidase family. GatA subfamily.</text>
</comment>
<keyword id="KW-0067">ATP-binding</keyword>
<keyword id="KW-0436">Ligase</keyword>
<keyword id="KW-0547">Nucleotide-binding</keyword>
<keyword id="KW-0648">Protein biosynthesis</keyword>
<organism>
    <name type="scientific">Listeria monocytogenes serotype 4a (strain HCC23)</name>
    <dbReference type="NCBI Taxonomy" id="552536"/>
    <lineage>
        <taxon>Bacteria</taxon>
        <taxon>Bacillati</taxon>
        <taxon>Bacillota</taxon>
        <taxon>Bacilli</taxon>
        <taxon>Bacillales</taxon>
        <taxon>Listeriaceae</taxon>
        <taxon>Listeria</taxon>
    </lineage>
</organism>
<gene>
    <name evidence="1" type="primary">gatA</name>
    <name type="ordered locus">LMHCC_0809</name>
</gene>
<evidence type="ECO:0000255" key="1">
    <source>
        <dbReference type="HAMAP-Rule" id="MF_00120"/>
    </source>
</evidence>
<name>GATA_LISMH</name>
<sequence length="483" mass="52297">MGLFDFSVKELHDKLVKKEISPFDLVSESFNRIESVEDKVGSFITLNKEAAFGVAEELGDAGIDPNNMLAGLPIGIKDNIVTKSLRTTAASKILENFDPIYDATVVSKLKNAQTINIGKLNMDEFAMGSSTETSYFHKTHNPWDLSRVPGGSSGGSASAVAAGEVLFSLGSDTGGSIRQPAAFCGVVGMKPTYGRVSRFGLIAFASSLDQIGPITKNVEDNAYLLEAISGLDANDSTSINQPVERFSDSLTGDIKGLRIGVPKEYLGEGVDPGVKQAVLDALKTLEKLGATWDEVSLPHSEYGVASYYILASSEASSNLSRFDGVRYGYRSPNATTLEELYTKTRSEGFGDEVKRRIMLGTYALSSGYYDAYYKKAQQARTLIKQDFVNVFENYDVIIGPSSPTTAFKIDGMINDPITMYSNDILTVPINLAGVPAISVPCGFSDGLPVGLQIIGNYFEESLLYKVAHAFEQETTFHKEKPNL</sequence>
<feature type="chain" id="PRO_1000122481" description="Glutamyl-tRNA(Gln) amidotransferase subunit A">
    <location>
        <begin position="1"/>
        <end position="483"/>
    </location>
</feature>
<feature type="active site" description="Charge relay system" evidence="1">
    <location>
        <position position="77"/>
    </location>
</feature>
<feature type="active site" description="Charge relay system" evidence="1">
    <location>
        <position position="152"/>
    </location>
</feature>
<feature type="active site" description="Acyl-ester intermediate" evidence="1">
    <location>
        <position position="176"/>
    </location>
</feature>
<dbReference type="EC" id="6.3.5.7" evidence="1"/>
<dbReference type="EMBL" id="CP001175">
    <property type="protein sequence ID" value="ACK39161.1"/>
    <property type="molecule type" value="Genomic_DNA"/>
</dbReference>
<dbReference type="RefSeq" id="WP_003729803.1">
    <property type="nucleotide sequence ID" value="NC_011660.1"/>
</dbReference>
<dbReference type="SMR" id="B8DFG8"/>
<dbReference type="KEGG" id="lmh:LMHCC_0809"/>
<dbReference type="HOGENOM" id="CLU_009600_0_3_9"/>
<dbReference type="GO" id="GO:0030956">
    <property type="term" value="C:glutamyl-tRNA(Gln) amidotransferase complex"/>
    <property type="evidence" value="ECO:0007669"/>
    <property type="project" value="InterPro"/>
</dbReference>
<dbReference type="GO" id="GO:0005524">
    <property type="term" value="F:ATP binding"/>
    <property type="evidence" value="ECO:0007669"/>
    <property type="project" value="UniProtKB-KW"/>
</dbReference>
<dbReference type="GO" id="GO:0050567">
    <property type="term" value="F:glutaminyl-tRNA synthase (glutamine-hydrolyzing) activity"/>
    <property type="evidence" value="ECO:0007669"/>
    <property type="project" value="UniProtKB-UniRule"/>
</dbReference>
<dbReference type="GO" id="GO:0006412">
    <property type="term" value="P:translation"/>
    <property type="evidence" value="ECO:0007669"/>
    <property type="project" value="UniProtKB-UniRule"/>
</dbReference>
<dbReference type="Gene3D" id="3.90.1300.10">
    <property type="entry name" value="Amidase signature (AS) domain"/>
    <property type="match status" value="1"/>
</dbReference>
<dbReference type="HAMAP" id="MF_00120">
    <property type="entry name" value="GatA"/>
    <property type="match status" value="1"/>
</dbReference>
<dbReference type="InterPro" id="IPR000120">
    <property type="entry name" value="Amidase"/>
</dbReference>
<dbReference type="InterPro" id="IPR020556">
    <property type="entry name" value="Amidase_CS"/>
</dbReference>
<dbReference type="InterPro" id="IPR023631">
    <property type="entry name" value="Amidase_dom"/>
</dbReference>
<dbReference type="InterPro" id="IPR036928">
    <property type="entry name" value="AS_sf"/>
</dbReference>
<dbReference type="InterPro" id="IPR004412">
    <property type="entry name" value="GatA"/>
</dbReference>
<dbReference type="NCBIfam" id="TIGR00132">
    <property type="entry name" value="gatA"/>
    <property type="match status" value="1"/>
</dbReference>
<dbReference type="PANTHER" id="PTHR11895:SF151">
    <property type="entry name" value="GLUTAMYL-TRNA(GLN) AMIDOTRANSFERASE SUBUNIT A"/>
    <property type="match status" value="1"/>
</dbReference>
<dbReference type="PANTHER" id="PTHR11895">
    <property type="entry name" value="TRANSAMIDASE"/>
    <property type="match status" value="1"/>
</dbReference>
<dbReference type="Pfam" id="PF01425">
    <property type="entry name" value="Amidase"/>
    <property type="match status" value="1"/>
</dbReference>
<dbReference type="SUPFAM" id="SSF75304">
    <property type="entry name" value="Amidase signature (AS) enzymes"/>
    <property type="match status" value="1"/>
</dbReference>
<dbReference type="PROSITE" id="PS00571">
    <property type="entry name" value="AMIDASES"/>
    <property type="match status" value="1"/>
</dbReference>
<reference key="1">
    <citation type="journal article" date="2011" name="J. Bacteriol.">
        <title>Genome sequence of lineage III Listeria monocytogenes strain HCC23.</title>
        <authorList>
            <person name="Steele C.L."/>
            <person name="Donaldson J.R."/>
            <person name="Paul D."/>
            <person name="Banes M.M."/>
            <person name="Arick T."/>
            <person name="Bridges S.M."/>
            <person name="Lawrence M.L."/>
        </authorList>
    </citation>
    <scope>NUCLEOTIDE SEQUENCE [LARGE SCALE GENOMIC DNA]</scope>
    <source>
        <strain>HCC23</strain>
    </source>
</reference>